<accession>Q21ZA0</accession>
<evidence type="ECO:0000255" key="1">
    <source>
        <dbReference type="HAMAP-Rule" id="MF_01398"/>
    </source>
</evidence>
<evidence type="ECO:0000256" key="2">
    <source>
        <dbReference type="SAM" id="MobiDB-lite"/>
    </source>
</evidence>
<keyword id="KW-0066">ATP synthesis</keyword>
<keyword id="KW-0997">Cell inner membrane</keyword>
<keyword id="KW-1003">Cell membrane</keyword>
<keyword id="KW-0138">CF(0)</keyword>
<keyword id="KW-0375">Hydrogen ion transport</keyword>
<keyword id="KW-0406">Ion transport</keyword>
<keyword id="KW-0472">Membrane</keyword>
<keyword id="KW-1185">Reference proteome</keyword>
<keyword id="KW-0812">Transmembrane</keyword>
<keyword id="KW-1133">Transmembrane helix</keyword>
<keyword id="KW-0813">Transport</keyword>
<protein>
    <recommendedName>
        <fullName evidence="1">ATP synthase subunit b 2</fullName>
    </recommendedName>
    <alternativeName>
        <fullName evidence="1">ATP synthase F(0) sector subunit b 2</fullName>
    </alternativeName>
    <alternativeName>
        <fullName evidence="1">ATPase subunit I 2</fullName>
    </alternativeName>
    <alternativeName>
        <fullName evidence="1">F-type ATPase subunit b 2</fullName>
        <shortName evidence="1">F-ATPase subunit b 2</shortName>
    </alternativeName>
</protein>
<gene>
    <name evidence="1" type="primary">atpF2</name>
    <name type="ordered locus">Rfer_1167</name>
</gene>
<dbReference type="EMBL" id="CP000267">
    <property type="protein sequence ID" value="ABD68903.1"/>
    <property type="molecule type" value="Genomic_DNA"/>
</dbReference>
<dbReference type="RefSeq" id="WP_011463472.1">
    <property type="nucleotide sequence ID" value="NC_007908.1"/>
</dbReference>
<dbReference type="SMR" id="Q21ZA0"/>
<dbReference type="STRING" id="338969.Rfer_1167"/>
<dbReference type="KEGG" id="rfr:Rfer_1167"/>
<dbReference type="eggNOG" id="COG0711">
    <property type="taxonomic scope" value="Bacteria"/>
</dbReference>
<dbReference type="HOGENOM" id="CLU_070737_0_0_4"/>
<dbReference type="OrthoDB" id="466272at2"/>
<dbReference type="Proteomes" id="UP000008332">
    <property type="component" value="Chromosome"/>
</dbReference>
<dbReference type="GO" id="GO:0005886">
    <property type="term" value="C:plasma membrane"/>
    <property type="evidence" value="ECO:0007669"/>
    <property type="project" value="UniProtKB-SubCell"/>
</dbReference>
<dbReference type="GO" id="GO:0045259">
    <property type="term" value="C:proton-transporting ATP synthase complex"/>
    <property type="evidence" value="ECO:0007669"/>
    <property type="project" value="UniProtKB-KW"/>
</dbReference>
<dbReference type="GO" id="GO:0046933">
    <property type="term" value="F:proton-transporting ATP synthase activity, rotational mechanism"/>
    <property type="evidence" value="ECO:0007669"/>
    <property type="project" value="UniProtKB-UniRule"/>
</dbReference>
<dbReference type="GO" id="GO:0046961">
    <property type="term" value="F:proton-transporting ATPase activity, rotational mechanism"/>
    <property type="evidence" value="ECO:0007669"/>
    <property type="project" value="TreeGrafter"/>
</dbReference>
<dbReference type="CDD" id="cd06503">
    <property type="entry name" value="ATP-synt_Fo_b"/>
    <property type="match status" value="1"/>
</dbReference>
<dbReference type="HAMAP" id="MF_01398">
    <property type="entry name" value="ATP_synth_b_bprime"/>
    <property type="match status" value="1"/>
</dbReference>
<dbReference type="InterPro" id="IPR017707">
    <property type="entry name" value="Alt_ATP_synth_F0_bsu"/>
</dbReference>
<dbReference type="InterPro" id="IPR002146">
    <property type="entry name" value="ATP_synth_b/b'su_bac/chlpt"/>
</dbReference>
<dbReference type="InterPro" id="IPR050059">
    <property type="entry name" value="ATP_synthase_B_chain"/>
</dbReference>
<dbReference type="InterPro" id="IPR021327">
    <property type="entry name" value="DUF2934"/>
</dbReference>
<dbReference type="NCBIfam" id="TIGR03321">
    <property type="entry name" value="alt_F1F0_F0_B"/>
    <property type="match status" value="1"/>
</dbReference>
<dbReference type="PANTHER" id="PTHR33445">
    <property type="entry name" value="ATP SYNTHASE SUBUNIT B', CHLOROPLASTIC"/>
    <property type="match status" value="1"/>
</dbReference>
<dbReference type="PANTHER" id="PTHR33445:SF2">
    <property type="entry name" value="ATP SYNTHASE SUBUNIT B', CHLOROPLASTIC"/>
    <property type="match status" value="1"/>
</dbReference>
<dbReference type="Pfam" id="PF00430">
    <property type="entry name" value="ATP-synt_B"/>
    <property type="match status" value="1"/>
</dbReference>
<dbReference type="Pfam" id="PF11154">
    <property type="entry name" value="DUF2934"/>
    <property type="match status" value="1"/>
</dbReference>
<reference key="1">
    <citation type="submission" date="2006-02" db="EMBL/GenBank/DDBJ databases">
        <title>Complete sequence of chromosome of Rhodoferax ferrireducens DSM 15236.</title>
        <authorList>
            <person name="Copeland A."/>
            <person name="Lucas S."/>
            <person name="Lapidus A."/>
            <person name="Barry K."/>
            <person name="Detter J.C."/>
            <person name="Glavina del Rio T."/>
            <person name="Hammon N."/>
            <person name="Israni S."/>
            <person name="Pitluck S."/>
            <person name="Brettin T."/>
            <person name="Bruce D."/>
            <person name="Han C."/>
            <person name="Tapia R."/>
            <person name="Gilna P."/>
            <person name="Kiss H."/>
            <person name="Schmutz J."/>
            <person name="Larimer F."/>
            <person name="Land M."/>
            <person name="Kyrpides N."/>
            <person name="Ivanova N."/>
            <person name="Richardson P."/>
        </authorList>
    </citation>
    <scope>NUCLEOTIDE SEQUENCE [LARGE SCALE GENOMIC DNA]</scope>
    <source>
        <strain>ATCC BAA-621 / DSM 15236 / T118</strain>
    </source>
</reference>
<comment type="function">
    <text evidence="1">F(1)F(0) ATP synthase produces ATP from ADP in the presence of a proton or sodium gradient. F-type ATPases consist of two structural domains, F(1) containing the extramembraneous catalytic core and F(0) containing the membrane proton channel, linked together by a central stalk and a peripheral stalk. During catalysis, ATP synthesis in the catalytic domain of F(1) is coupled via a rotary mechanism of the central stalk subunits to proton translocation.</text>
</comment>
<comment type="function">
    <text evidence="1">Component of the F(0) channel, it forms part of the peripheral stalk, linking F(1) to F(0).</text>
</comment>
<comment type="subunit">
    <text evidence="1">F-type ATPases have 2 components, F(1) - the catalytic core - and F(0) - the membrane proton channel. F(1) has five subunits: alpha(3), beta(3), gamma(1), delta(1), epsilon(1). F(0) has three main subunits: a(1), b(2) and c(10-14). The alpha and beta chains form an alternating ring which encloses part of the gamma chain. F(1) is attached to F(0) by a central stalk formed by the gamma and epsilon chains, while a peripheral stalk is formed by the delta and b chains.</text>
</comment>
<comment type="subcellular location">
    <subcellularLocation>
        <location evidence="1">Cell inner membrane</location>
        <topology evidence="1">Single-pass membrane protein</topology>
    </subcellularLocation>
</comment>
<comment type="similarity">
    <text evidence="1">Belongs to the ATPase B chain family.</text>
</comment>
<proteinExistence type="inferred from homology"/>
<feature type="chain" id="PRO_0000368717" description="ATP synthase subunit b 2">
    <location>
        <begin position="1"/>
        <end position="326"/>
    </location>
</feature>
<feature type="transmembrane region" description="Helical" evidence="1">
    <location>
        <begin position="2"/>
        <end position="22"/>
    </location>
</feature>
<feature type="region of interest" description="Disordered" evidence="2">
    <location>
        <begin position="275"/>
        <end position="326"/>
    </location>
</feature>
<feature type="compositionally biased region" description="Basic and acidic residues" evidence="2">
    <location>
        <begin position="275"/>
        <end position="298"/>
    </location>
</feature>
<feature type="compositionally biased region" description="Basic and acidic residues" evidence="2">
    <location>
        <begin position="306"/>
        <end position="326"/>
    </location>
</feature>
<sequence>MLIDWFTVVAQALNFLILVWLLKRFLYQPILDAIDAREKRIALELADADTKRADAKRERDEFQQKNEVFDQQRAALLGKAMEEAKTERQRLLDDARHAADALATKRQEALRSAQRSMSEALSHRARDEVFAIARKALGDLATTSLEERMGEVFTRRLREMDAKAKAALGEALKTASEPALVRSAFELPADQRAAIQNAINETFSADIPLHFATAPEVVCGIELSTNGQKVGWSITDYLASLEKGVDELLKERDKAEPQSELTRQIRKRAYELYEQQGRKEGRAVQNWDKAESEIRKENLSPAKTEPPPEAKAKPKPEEPKPEIGSP</sequence>
<organism>
    <name type="scientific">Albidiferax ferrireducens (strain ATCC BAA-621 / DSM 15236 / T118)</name>
    <name type="common">Rhodoferax ferrireducens</name>
    <dbReference type="NCBI Taxonomy" id="338969"/>
    <lineage>
        <taxon>Bacteria</taxon>
        <taxon>Pseudomonadati</taxon>
        <taxon>Pseudomonadota</taxon>
        <taxon>Betaproteobacteria</taxon>
        <taxon>Burkholderiales</taxon>
        <taxon>Comamonadaceae</taxon>
        <taxon>Rhodoferax</taxon>
    </lineage>
</organism>
<name>ATPF2_ALBFT</name>